<organism>
    <name type="scientific">Gallus gallus</name>
    <name type="common">Chicken</name>
    <dbReference type="NCBI Taxonomy" id="9031"/>
    <lineage>
        <taxon>Eukaryota</taxon>
        <taxon>Metazoa</taxon>
        <taxon>Chordata</taxon>
        <taxon>Craniata</taxon>
        <taxon>Vertebrata</taxon>
        <taxon>Euteleostomi</taxon>
        <taxon>Archelosauria</taxon>
        <taxon>Archosauria</taxon>
        <taxon>Dinosauria</taxon>
        <taxon>Saurischia</taxon>
        <taxon>Theropoda</taxon>
        <taxon>Coelurosauria</taxon>
        <taxon>Aves</taxon>
        <taxon>Neognathae</taxon>
        <taxon>Galloanserae</taxon>
        <taxon>Galliformes</taxon>
        <taxon>Phasianidae</taxon>
        <taxon>Phasianinae</taxon>
        <taxon>Gallus</taxon>
    </lineage>
</organism>
<comment type="function">
    <text evidence="1 2">Oxygenase that can act as both a histone lysine demethylase and a ribosomal histidine hydroxylase (By similarity). Specifically demethylates 'Lys-4' (H3K4me) and 'Lys-36' (H3K36me) of histone H3, thereby playing a central role in histone code. Preferentially demethylates trimethylated H3 'Lys-4' (H3K4me3) and monomethylated H3 'Lys-4' (H3K4me1) residues, while it has weaker activity for dimethylated H3 'Lys-36' (H3K36me2). Also catalyzes demethylation of non-histone proteins (By similarity). Also catalyzes the hydroxylation of 60S ribosomal protein L8 on 'His-216', thereby playing a role in ribosome biogenesis (By similarity).</text>
</comment>
<comment type="catalytic activity">
    <reaction evidence="2">
        <text>N(6),N(6)-dimethyl-L-lysyl(36)-[histone H3] + 2 2-oxoglutarate + 2 O2 = L-lysyl(36)-[histone H3] + 2 formaldehyde + 2 succinate + 2 CO2</text>
        <dbReference type="Rhea" id="RHEA:42032"/>
        <dbReference type="Rhea" id="RHEA-COMP:9785"/>
        <dbReference type="Rhea" id="RHEA-COMP:9787"/>
        <dbReference type="ChEBI" id="CHEBI:15379"/>
        <dbReference type="ChEBI" id="CHEBI:16526"/>
        <dbReference type="ChEBI" id="CHEBI:16810"/>
        <dbReference type="ChEBI" id="CHEBI:16842"/>
        <dbReference type="ChEBI" id="CHEBI:29969"/>
        <dbReference type="ChEBI" id="CHEBI:30031"/>
        <dbReference type="ChEBI" id="CHEBI:61976"/>
        <dbReference type="EC" id="1.14.11.27"/>
    </reaction>
    <physiologicalReaction direction="left-to-right" evidence="2">
        <dbReference type="Rhea" id="RHEA:42033"/>
    </physiologicalReaction>
</comment>
<comment type="catalytic activity">
    <reaction evidence="1">
        <text>N(6)-methyl-L-lysyl-[protein] + 2-oxoglutarate + O2 = L-lysyl-[protein] + formaldehyde + succinate + CO2</text>
        <dbReference type="Rhea" id="RHEA:60924"/>
        <dbReference type="Rhea" id="RHEA-COMP:9752"/>
        <dbReference type="Rhea" id="RHEA-COMP:13053"/>
        <dbReference type="ChEBI" id="CHEBI:15379"/>
        <dbReference type="ChEBI" id="CHEBI:16526"/>
        <dbReference type="ChEBI" id="CHEBI:16810"/>
        <dbReference type="ChEBI" id="CHEBI:16842"/>
        <dbReference type="ChEBI" id="CHEBI:29969"/>
        <dbReference type="ChEBI" id="CHEBI:30031"/>
        <dbReference type="ChEBI" id="CHEBI:61929"/>
    </reaction>
    <physiologicalReaction direction="left-to-right" evidence="1">
        <dbReference type="Rhea" id="RHEA:60925"/>
    </physiologicalReaction>
</comment>
<comment type="catalytic activity">
    <reaction evidence="1">
        <text>L-histidyl-[protein] + 2-oxoglutarate + O2 = (3S)-3-hydroxy-L-histidyl-[protein] + succinate + CO2</text>
        <dbReference type="Rhea" id="RHEA:54256"/>
        <dbReference type="Rhea" id="RHEA-COMP:9745"/>
        <dbReference type="Rhea" id="RHEA-COMP:13840"/>
        <dbReference type="ChEBI" id="CHEBI:15379"/>
        <dbReference type="ChEBI" id="CHEBI:16526"/>
        <dbReference type="ChEBI" id="CHEBI:16810"/>
        <dbReference type="ChEBI" id="CHEBI:29979"/>
        <dbReference type="ChEBI" id="CHEBI:30031"/>
        <dbReference type="ChEBI" id="CHEBI:138021"/>
        <dbReference type="EC" id="1.14.11.79"/>
    </reaction>
    <physiologicalReaction direction="left-to-right" evidence="1">
        <dbReference type="Rhea" id="RHEA:54257"/>
    </physiologicalReaction>
</comment>
<comment type="cofactor">
    <cofactor evidence="2">
        <name>Fe(2+)</name>
        <dbReference type="ChEBI" id="CHEBI:29033"/>
    </cofactor>
    <text evidence="2">Binds 1 Fe(2+) ion per subunit.</text>
</comment>
<comment type="subcellular location">
    <subcellularLocation>
        <location evidence="1">Nucleus</location>
        <location evidence="1">Nucleolus</location>
    </subcellularLocation>
    <subcellularLocation>
        <location evidence="1">Nucleus</location>
        <location evidence="1">Nucleoplasm</location>
    </subcellularLocation>
    <text evidence="1">Granular part of nucleoli. Nucleoplasm, nucleoplasmic foci, some of them associated with nucleoli.</text>
</comment>
<comment type="similarity">
    <text evidence="5">Belongs to the ROX family. NO66 subfamily.</text>
</comment>
<gene>
    <name type="primary">RIOX1</name>
    <name type="synonym">NO66</name>
    <name type="ORF">RCJMB04_1k4</name>
</gene>
<dbReference type="EC" id="1.14.11.27" evidence="2"/>
<dbReference type="EC" id="1.14.11.79" evidence="2"/>
<dbReference type="EMBL" id="AJ719363">
    <property type="protein sequence ID" value="CAG31022.1"/>
    <property type="molecule type" value="mRNA"/>
</dbReference>
<dbReference type="RefSeq" id="NP_001026367.1">
    <property type="nucleotide sequence ID" value="NM_001031196.1"/>
</dbReference>
<dbReference type="SMR" id="Q5ZMM1"/>
<dbReference type="FunCoup" id="Q5ZMM1">
    <property type="interactions" value="960"/>
</dbReference>
<dbReference type="STRING" id="9031.ENSGALP00000031993"/>
<dbReference type="PaxDb" id="9031-ENSGALP00000031993"/>
<dbReference type="GeneID" id="423249"/>
<dbReference type="KEGG" id="gga:423249"/>
<dbReference type="CTD" id="79697"/>
<dbReference type="VEuPathDB" id="HostDB:geneid_423249"/>
<dbReference type="eggNOG" id="KOG3706">
    <property type="taxonomic scope" value="Eukaryota"/>
</dbReference>
<dbReference type="InParanoid" id="Q5ZMM1"/>
<dbReference type="OMA" id="YLEYMGV"/>
<dbReference type="OrthoDB" id="425950at2759"/>
<dbReference type="PhylomeDB" id="Q5ZMM1"/>
<dbReference type="PRO" id="PR:Q5ZMM1"/>
<dbReference type="Proteomes" id="UP000000539">
    <property type="component" value="Unassembled WGS sequence"/>
</dbReference>
<dbReference type="GO" id="GO:0005730">
    <property type="term" value="C:nucleolus"/>
    <property type="evidence" value="ECO:0000318"/>
    <property type="project" value="GO_Central"/>
</dbReference>
<dbReference type="GO" id="GO:0005654">
    <property type="term" value="C:nucleoplasm"/>
    <property type="evidence" value="ECO:0007669"/>
    <property type="project" value="UniProtKB-SubCell"/>
</dbReference>
<dbReference type="GO" id="GO:0005634">
    <property type="term" value="C:nucleus"/>
    <property type="evidence" value="ECO:0000250"/>
    <property type="project" value="UniProtKB"/>
</dbReference>
<dbReference type="GO" id="GO:0016706">
    <property type="term" value="F:2-oxoglutarate-dependent dioxygenase activity"/>
    <property type="evidence" value="ECO:0000250"/>
    <property type="project" value="UniProtKB"/>
</dbReference>
<dbReference type="GO" id="GO:0051864">
    <property type="term" value="F:histone H3K36 demethylase activity"/>
    <property type="evidence" value="ECO:0000250"/>
    <property type="project" value="UniProtKB"/>
</dbReference>
<dbReference type="GO" id="GO:0140680">
    <property type="term" value="F:histone H3K36me/H3K36me2 demethylase activity"/>
    <property type="evidence" value="ECO:0007669"/>
    <property type="project" value="UniProtKB-EC"/>
</dbReference>
<dbReference type="GO" id="GO:0032453">
    <property type="term" value="F:histone H3K4 demethylase activity"/>
    <property type="evidence" value="ECO:0000318"/>
    <property type="project" value="GO_Central"/>
</dbReference>
<dbReference type="GO" id="GO:0034647">
    <property type="term" value="F:histone H3K4me/H3K4me2/H3K4me3 demethylase activity"/>
    <property type="evidence" value="ECO:0000250"/>
    <property type="project" value="UniProtKB"/>
</dbReference>
<dbReference type="GO" id="GO:0005506">
    <property type="term" value="F:iron ion binding"/>
    <property type="evidence" value="ECO:0000250"/>
    <property type="project" value="UniProtKB"/>
</dbReference>
<dbReference type="GO" id="GO:0036139">
    <property type="term" value="F:peptidyl-histidine dioxygenase activity"/>
    <property type="evidence" value="ECO:0000250"/>
    <property type="project" value="UniProtKB"/>
</dbReference>
<dbReference type="GO" id="GO:0140457">
    <property type="term" value="F:protein demethylase activity"/>
    <property type="evidence" value="ECO:0000250"/>
    <property type="project" value="UniProtKB"/>
</dbReference>
<dbReference type="GO" id="GO:0045892">
    <property type="term" value="P:negative regulation of DNA-templated transcription"/>
    <property type="evidence" value="ECO:0000250"/>
    <property type="project" value="UniProtKB"/>
</dbReference>
<dbReference type="GO" id="GO:0045668">
    <property type="term" value="P:negative regulation of osteoblast differentiation"/>
    <property type="evidence" value="ECO:0000250"/>
    <property type="project" value="UniProtKB"/>
</dbReference>
<dbReference type="FunFam" id="2.60.120.650:FF:000013">
    <property type="entry name" value="Ribosomal oxygenase 1"/>
    <property type="match status" value="1"/>
</dbReference>
<dbReference type="FunFam" id="1.10.10.1500:FF:000001">
    <property type="entry name" value="ribosomal oxygenase 1 isoform X1"/>
    <property type="match status" value="1"/>
</dbReference>
<dbReference type="FunFam" id="3.90.930.40:FF:000001">
    <property type="entry name" value="ribosomal oxygenase 1 isoform X1"/>
    <property type="match status" value="1"/>
</dbReference>
<dbReference type="Gene3D" id="3.90.930.40">
    <property type="match status" value="1"/>
</dbReference>
<dbReference type="Gene3D" id="2.60.120.650">
    <property type="entry name" value="Cupin"/>
    <property type="match status" value="1"/>
</dbReference>
<dbReference type="Gene3D" id="1.10.10.1500">
    <property type="entry name" value="JmjC domain-containing ribosomal oxygenase (ROX), dimer domain"/>
    <property type="match status" value="1"/>
</dbReference>
<dbReference type="InterPro" id="IPR003347">
    <property type="entry name" value="JmjC_dom"/>
</dbReference>
<dbReference type="InterPro" id="IPR039994">
    <property type="entry name" value="NO66-like"/>
</dbReference>
<dbReference type="InterPro" id="IPR049043">
    <property type="entry name" value="RIOX1/NO66-like_C_WH"/>
</dbReference>
<dbReference type="PANTHER" id="PTHR13096">
    <property type="entry name" value="MINA53 MYC INDUCED NUCLEAR ANTIGEN"/>
    <property type="match status" value="1"/>
</dbReference>
<dbReference type="PANTHER" id="PTHR13096:SF8">
    <property type="entry name" value="RIBOSOMAL OXYGENASE 1"/>
    <property type="match status" value="1"/>
</dbReference>
<dbReference type="Pfam" id="PF08007">
    <property type="entry name" value="JmjC_2"/>
    <property type="match status" value="1"/>
</dbReference>
<dbReference type="Pfam" id="PF21233">
    <property type="entry name" value="RIOX1_C_WH"/>
    <property type="match status" value="1"/>
</dbReference>
<dbReference type="SUPFAM" id="SSF51197">
    <property type="entry name" value="Clavaminate synthase-like"/>
    <property type="match status" value="1"/>
</dbReference>
<dbReference type="PROSITE" id="PS51184">
    <property type="entry name" value="JMJC"/>
    <property type="match status" value="1"/>
</dbReference>
<keyword id="KW-0156">Chromatin regulator</keyword>
<keyword id="KW-0223">Dioxygenase</keyword>
<keyword id="KW-0408">Iron</keyword>
<keyword id="KW-0479">Metal-binding</keyword>
<keyword id="KW-0539">Nucleus</keyword>
<keyword id="KW-0560">Oxidoreductase</keyword>
<keyword id="KW-1185">Reference proteome</keyword>
<keyword id="KW-0678">Repressor</keyword>
<keyword id="KW-0804">Transcription</keyword>
<keyword id="KW-0805">Transcription regulation</keyword>
<accession>Q5ZMM1</accession>
<proteinExistence type="evidence at transcript level"/>
<sequence length="601" mass="65685">MAACGAEERQRTGRLSALSVYRRAAGPGRLERRRRGTPLPAGGKRTKARLRRGAAGGGGPERAAPPQGAAVSDRVERAGSSEAKQGDLKTNPSGPPAKAPAGNLETKSPGGPLTTSVGPRAKAPAGSPEAKPPGDPATSPGGGGVPGLLRRLGRLEDSRRRAAELFRWLVAPAAPEEFARQHWERAPLLVQRGDPGYYAGLFSTADFDAILRSGDVHFGTHLDVTSYAEGVRETHNPVGRALPAVVWDFYQNGCSLRLLSPQAFSTTVWHFLSILQEHFGSMAGANTYLTPPGTQGFAPHYDDIEAFVLQLEGKKHWRVYGPRTSSEALPQFSSANLTQAELGEPLLEVVLEAGDLLYFPRGFIHQADCLPDAHSLHITVSSYQRNSWGDFLEKLLPAALQMALEEDLEYRQGLPMDCLGYMGVANSDAVDARRTAFVEKVQHLIKKLVDYAPIDAAMDQRAKSFLHDCLPPVLTQSEKQLSVYGFPARWQDGGPRNVDIQITKDTEVRLLHHGVVRLCNEEAGVMLYYTTENSRVYHKEEPKYLEIDPEYTDSIEFLLSSYPNHVSVDTLPCDALEDKISLATLLFEKGILTTKKPLVQV</sequence>
<feature type="chain" id="PRO_0000390976" description="Ribosomal oxygenase 1">
    <location>
        <begin position="1"/>
        <end position="601"/>
    </location>
</feature>
<feature type="domain" description="JmjC" evidence="3">
    <location>
        <begin position="254"/>
        <end position="399"/>
    </location>
</feature>
<feature type="region of interest" description="Disordered" evidence="4">
    <location>
        <begin position="1"/>
        <end position="149"/>
    </location>
</feature>
<feature type="compositionally biased region" description="Basic and acidic residues" evidence="4">
    <location>
        <begin position="1"/>
        <end position="11"/>
    </location>
</feature>
<feature type="compositionally biased region" description="Low complexity" evidence="4">
    <location>
        <begin position="61"/>
        <end position="70"/>
    </location>
</feature>
<feature type="compositionally biased region" description="Basic and acidic residues" evidence="4">
    <location>
        <begin position="73"/>
        <end position="87"/>
    </location>
</feature>
<feature type="binding site" evidence="3">
    <location>
        <position position="300"/>
    </location>
    <ligand>
        <name>Fe cation</name>
        <dbReference type="ChEBI" id="CHEBI:24875"/>
        <note>catalytic</note>
    </ligand>
</feature>
<feature type="binding site" evidence="3">
    <location>
        <position position="302"/>
    </location>
    <ligand>
        <name>Fe cation</name>
        <dbReference type="ChEBI" id="CHEBI:24875"/>
        <note>catalytic</note>
    </ligand>
</feature>
<feature type="binding site" evidence="3">
    <location>
        <position position="365"/>
    </location>
    <ligand>
        <name>Fe cation</name>
        <dbReference type="ChEBI" id="CHEBI:24875"/>
        <note>catalytic</note>
    </ligand>
</feature>
<name>RIOX1_CHICK</name>
<reference key="1">
    <citation type="journal article" date="2005" name="Genome Biol.">
        <title>Full-length cDNAs from chicken bursal lymphocytes to facilitate gene function analysis.</title>
        <authorList>
            <person name="Caldwell R.B."/>
            <person name="Kierzek A.M."/>
            <person name="Arakawa H."/>
            <person name="Bezzubov Y."/>
            <person name="Zaim J."/>
            <person name="Fiedler P."/>
            <person name="Kutter S."/>
            <person name="Blagodatski A."/>
            <person name="Kostovska D."/>
            <person name="Koter M."/>
            <person name="Plachy J."/>
            <person name="Carninci P."/>
            <person name="Hayashizaki Y."/>
            <person name="Buerstedde J.-M."/>
        </authorList>
    </citation>
    <scope>NUCLEOTIDE SEQUENCE [LARGE SCALE MRNA]</scope>
    <source>
        <strain>CB</strain>
        <tissue>Bursa of Fabricius</tissue>
    </source>
</reference>
<evidence type="ECO:0000250" key="1">
    <source>
        <dbReference type="UniProtKB" id="Q9H6W3"/>
    </source>
</evidence>
<evidence type="ECO:0000250" key="2">
    <source>
        <dbReference type="UniProtKB" id="Q9JJF3"/>
    </source>
</evidence>
<evidence type="ECO:0000255" key="3">
    <source>
        <dbReference type="PROSITE-ProRule" id="PRU00538"/>
    </source>
</evidence>
<evidence type="ECO:0000256" key="4">
    <source>
        <dbReference type="SAM" id="MobiDB-lite"/>
    </source>
</evidence>
<evidence type="ECO:0000305" key="5"/>
<protein>
    <recommendedName>
        <fullName>Ribosomal oxygenase 1</fullName>
    </recommendedName>
    <alternativeName>
        <fullName>Bifunctional lysine-specific demethylase and histidyl-hydroxylase NO66</fullName>
        <ecNumber evidence="2">1.14.11.27</ecNumber>
        <ecNumber evidence="2">1.14.11.79</ecNumber>
    </alternativeName>
    <alternativeName>
        <fullName>Histone lysine demethylase NO66</fullName>
    </alternativeName>
</protein>